<keyword id="KW-0997">Cell inner membrane</keyword>
<keyword id="KW-1003">Cell membrane</keyword>
<keyword id="KW-0472">Membrane</keyword>
<keyword id="KW-0520">NAD</keyword>
<keyword id="KW-0874">Quinone</keyword>
<keyword id="KW-1185">Reference proteome</keyword>
<keyword id="KW-1278">Translocase</keyword>
<keyword id="KW-0812">Transmembrane</keyword>
<keyword id="KW-1133">Transmembrane helix</keyword>
<keyword id="KW-0813">Transport</keyword>
<keyword id="KW-0830">Ubiquinone</keyword>
<evidence type="ECO:0000255" key="1">
    <source>
        <dbReference type="HAMAP-Rule" id="MF_00445"/>
    </source>
</evidence>
<feature type="chain" id="PRO_0000249443" description="NADH-quinone oxidoreductase subunit N">
    <location>
        <begin position="1"/>
        <end position="485"/>
    </location>
</feature>
<feature type="transmembrane region" description="Helical" evidence="1">
    <location>
        <begin position="8"/>
        <end position="28"/>
    </location>
</feature>
<feature type="transmembrane region" description="Helical" evidence="1">
    <location>
        <begin position="35"/>
        <end position="55"/>
    </location>
</feature>
<feature type="transmembrane region" description="Helical" evidence="1">
    <location>
        <begin position="75"/>
        <end position="95"/>
    </location>
</feature>
<feature type="transmembrane region" description="Helical" evidence="1">
    <location>
        <begin position="105"/>
        <end position="125"/>
    </location>
</feature>
<feature type="transmembrane region" description="Helical" evidence="1">
    <location>
        <begin position="127"/>
        <end position="147"/>
    </location>
</feature>
<feature type="transmembrane region" description="Helical" evidence="1">
    <location>
        <begin position="159"/>
        <end position="179"/>
    </location>
</feature>
<feature type="transmembrane region" description="Helical" evidence="1">
    <location>
        <begin position="203"/>
        <end position="223"/>
    </location>
</feature>
<feature type="transmembrane region" description="Helical" evidence="1">
    <location>
        <begin position="235"/>
        <end position="255"/>
    </location>
</feature>
<feature type="transmembrane region" description="Helical" evidence="1">
    <location>
        <begin position="271"/>
        <end position="291"/>
    </location>
</feature>
<feature type="transmembrane region" description="Helical" evidence="1">
    <location>
        <begin position="297"/>
        <end position="317"/>
    </location>
</feature>
<feature type="transmembrane region" description="Helical" evidence="1">
    <location>
        <begin position="326"/>
        <end position="346"/>
    </location>
</feature>
<feature type="transmembrane region" description="Helical" evidence="1">
    <location>
        <begin position="374"/>
        <end position="394"/>
    </location>
</feature>
<feature type="transmembrane region" description="Helical" evidence="1">
    <location>
        <begin position="407"/>
        <end position="426"/>
    </location>
</feature>
<feature type="transmembrane region" description="Helical" evidence="1">
    <location>
        <begin position="449"/>
        <end position="469"/>
    </location>
</feature>
<reference key="1">
    <citation type="journal article" date="2004" name="Proc. Natl. Acad. Sci. U.S.A.">
        <title>Genome sequence of the enterobacterial phytopathogen Erwinia carotovora subsp. atroseptica and characterization of virulence factors.</title>
        <authorList>
            <person name="Bell K.S."/>
            <person name="Sebaihia M."/>
            <person name="Pritchard L."/>
            <person name="Holden M.T.G."/>
            <person name="Hyman L.J."/>
            <person name="Holeva M.C."/>
            <person name="Thomson N.R."/>
            <person name="Bentley S.D."/>
            <person name="Churcher L.J.C."/>
            <person name="Mungall K."/>
            <person name="Atkin R."/>
            <person name="Bason N."/>
            <person name="Brooks K."/>
            <person name="Chillingworth T."/>
            <person name="Clark K."/>
            <person name="Doggett J."/>
            <person name="Fraser A."/>
            <person name="Hance Z."/>
            <person name="Hauser H."/>
            <person name="Jagels K."/>
            <person name="Moule S."/>
            <person name="Norbertczak H."/>
            <person name="Ormond D."/>
            <person name="Price C."/>
            <person name="Quail M.A."/>
            <person name="Sanders M."/>
            <person name="Walker D."/>
            <person name="Whitehead S."/>
            <person name="Salmond G.P.C."/>
            <person name="Birch P.R.J."/>
            <person name="Parkhill J."/>
            <person name="Toth I.K."/>
        </authorList>
    </citation>
    <scope>NUCLEOTIDE SEQUENCE [LARGE SCALE GENOMIC DNA]</scope>
    <source>
        <strain>SCRI 1043 / ATCC BAA-672</strain>
    </source>
</reference>
<gene>
    <name evidence="1" type="primary">nuoN</name>
    <name type="ordered locus">ECA3016</name>
</gene>
<proteinExistence type="inferred from homology"/>
<sequence>MTITLQQLIALSPLLIVGLTVVVVMLCIAWRRNHFVNATMTVIGLNIALLSLYFVGQVGPTDVTPLLRVDGFSMFYTGLVLLASLATSTFAYPWLQGYPDNRDEFYLLVLIAALGGILLSSANHLASLFIGIELLSLPLFGLVGYAFRLKRSLEASIKYMLLSAAASSFLLFGMALIYAESGDMSFASLGKSLSDHQIHEPLLLAGLGMMIVGLGFKLSLVPFQLWTPDVYQGAPAPVSTFLATAGKIAVFGAVMRLFLYAPVADSESVRIVLSIIAFASIMFGNVMAVSQTNIKRLLGYSSIAHLGYLLVALIAVQSHQLALETVGVYLVGYLFSSLGAFGVVSLMSSPYRGPDADSLFSYRGLFWHKPILSAVMTVMMLSLAGIPMTLGFFGKFYVLAVGVNAELWWLTGAVVLGSAIGLYYYLRVMVSLFLNAPQVLQRDTPNNWALTAGGVVVLISSIVVLFFGLYPQPLISLVQLVQPMM</sequence>
<comment type="function">
    <text evidence="1">NDH-1 shuttles electrons from NADH, via FMN and iron-sulfur (Fe-S) centers, to quinones in the respiratory chain. The immediate electron acceptor for the enzyme in this species is believed to be ubiquinone. Couples the redox reaction to proton translocation (for every two electrons transferred, four hydrogen ions are translocated across the cytoplasmic membrane), and thus conserves the redox energy in a proton gradient.</text>
</comment>
<comment type="catalytic activity">
    <reaction evidence="1">
        <text>a quinone + NADH + 5 H(+)(in) = a quinol + NAD(+) + 4 H(+)(out)</text>
        <dbReference type="Rhea" id="RHEA:57888"/>
        <dbReference type="ChEBI" id="CHEBI:15378"/>
        <dbReference type="ChEBI" id="CHEBI:24646"/>
        <dbReference type="ChEBI" id="CHEBI:57540"/>
        <dbReference type="ChEBI" id="CHEBI:57945"/>
        <dbReference type="ChEBI" id="CHEBI:132124"/>
    </reaction>
</comment>
<comment type="subunit">
    <text evidence="1">NDH-1 is composed of 13 different subunits. Subunits NuoA, H, J, K, L, M, N constitute the membrane sector of the complex.</text>
</comment>
<comment type="subcellular location">
    <subcellularLocation>
        <location evidence="1">Cell inner membrane</location>
        <topology evidence="1">Multi-pass membrane protein</topology>
    </subcellularLocation>
</comment>
<comment type="similarity">
    <text evidence="1">Belongs to the complex I subunit 2 family.</text>
</comment>
<organism>
    <name type="scientific">Pectobacterium atrosepticum (strain SCRI 1043 / ATCC BAA-672)</name>
    <name type="common">Erwinia carotovora subsp. atroseptica</name>
    <dbReference type="NCBI Taxonomy" id="218491"/>
    <lineage>
        <taxon>Bacteria</taxon>
        <taxon>Pseudomonadati</taxon>
        <taxon>Pseudomonadota</taxon>
        <taxon>Gammaproteobacteria</taxon>
        <taxon>Enterobacterales</taxon>
        <taxon>Pectobacteriaceae</taxon>
        <taxon>Pectobacterium</taxon>
    </lineage>
</organism>
<accession>Q6D2S9</accession>
<name>NUON_PECAS</name>
<dbReference type="EC" id="7.1.1.-" evidence="1"/>
<dbReference type="EMBL" id="BX950851">
    <property type="protein sequence ID" value="CAG75915.1"/>
    <property type="molecule type" value="Genomic_DNA"/>
</dbReference>
<dbReference type="RefSeq" id="WP_011094546.1">
    <property type="nucleotide sequence ID" value="NC_004547.2"/>
</dbReference>
<dbReference type="SMR" id="Q6D2S9"/>
<dbReference type="STRING" id="218491.ECA3016"/>
<dbReference type="KEGG" id="eca:ECA3016"/>
<dbReference type="PATRIC" id="fig|218491.5.peg.3049"/>
<dbReference type="eggNOG" id="COG1007">
    <property type="taxonomic scope" value="Bacteria"/>
</dbReference>
<dbReference type="HOGENOM" id="CLU_007100_1_5_6"/>
<dbReference type="OrthoDB" id="9768329at2"/>
<dbReference type="Proteomes" id="UP000007966">
    <property type="component" value="Chromosome"/>
</dbReference>
<dbReference type="GO" id="GO:0005886">
    <property type="term" value="C:plasma membrane"/>
    <property type="evidence" value="ECO:0007669"/>
    <property type="project" value="UniProtKB-SubCell"/>
</dbReference>
<dbReference type="GO" id="GO:0008137">
    <property type="term" value="F:NADH dehydrogenase (ubiquinone) activity"/>
    <property type="evidence" value="ECO:0007669"/>
    <property type="project" value="InterPro"/>
</dbReference>
<dbReference type="GO" id="GO:0050136">
    <property type="term" value="F:NADH:ubiquinone reductase (non-electrogenic) activity"/>
    <property type="evidence" value="ECO:0007669"/>
    <property type="project" value="UniProtKB-UniRule"/>
</dbReference>
<dbReference type="GO" id="GO:0048038">
    <property type="term" value="F:quinone binding"/>
    <property type="evidence" value="ECO:0007669"/>
    <property type="project" value="UniProtKB-KW"/>
</dbReference>
<dbReference type="GO" id="GO:0042773">
    <property type="term" value="P:ATP synthesis coupled electron transport"/>
    <property type="evidence" value="ECO:0007669"/>
    <property type="project" value="InterPro"/>
</dbReference>
<dbReference type="HAMAP" id="MF_00445">
    <property type="entry name" value="NDH1_NuoN_1"/>
    <property type="match status" value="1"/>
</dbReference>
<dbReference type="InterPro" id="IPR010096">
    <property type="entry name" value="NADH-Q_OxRdtase_suN/2"/>
</dbReference>
<dbReference type="InterPro" id="IPR001750">
    <property type="entry name" value="ND/Mrp_TM"/>
</dbReference>
<dbReference type="NCBIfam" id="TIGR01770">
    <property type="entry name" value="NDH_I_N"/>
    <property type="match status" value="1"/>
</dbReference>
<dbReference type="NCBIfam" id="NF004439">
    <property type="entry name" value="PRK05777.1-1"/>
    <property type="match status" value="1"/>
</dbReference>
<dbReference type="PANTHER" id="PTHR22773">
    <property type="entry name" value="NADH DEHYDROGENASE"/>
    <property type="match status" value="1"/>
</dbReference>
<dbReference type="Pfam" id="PF00361">
    <property type="entry name" value="Proton_antipo_M"/>
    <property type="match status" value="1"/>
</dbReference>
<protein>
    <recommendedName>
        <fullName evidence="1">NADH-quinone oxidoreductase subunit N</fullName>
        <ecNumber evidence="1">7.1.1.-</ecNumber>
    </recommendedName>
    <alternativeName>
        <fullName evidence="1">NADH dehydrogenase I subunit N</fullName>
    </alternativeName>
    <alternativeName>
        <fullName evidence="1">NDH-1 subunit N</fullName>
    </alternativeName>
</protein>